<accession>Q7MTJ5</accession>
<keyword id="KW-1185">Reference proteome</keyword>
<keyword id="KW-0687">Ribonucleoprotein</keyword>
<keyword id="KW-0689">Ribosomal protein</keyword>
<sequence length="62" mass="7339">MAKKVKGNRVQVILECTEHKESGMPGISRYITTKNRKNTTQRLELKKYNPILRRMTLHKEIK</sequence>
<evidence type="ECO:0000255" key="1">
    <source>
        <dbReference type="HAMAP-Rule" id="MF_00294"/>
    </source>
</evidence>
<evidence type="ECO:0000305" key="2"/>
<comment type="similarity">
    <text evidence="1">Belongs to the bacterial ribosomal protein bL33 family.</text>
</comment>
<gene>
    <name evidence="1" type="primary">rpmG</name>
    <name type="ordered locus">PG_1959</name>
</gene>
<name>RL33_PORGI</name>
<reference key="1">
    <citation type="journal article" date="2003" name="J. Bacteriol.">
        <title>Complete genome sequence of the oral pathogenic bacterium Porphyromonas gingivalis strain W83.</title>
        <authorList>
            <person name="Nelson K.E."/>
            <person name="Fleischmann R.D."/>
            <person name="DeBoy R.T."/>
            <person name="Paulsen I.T."/>
            <person name="Fouts D.E."/>
            <person name="Eisen J.A."/>
            <person name="Daugherty S.C."/>
            <person name="Dodson R.J."/>
            <person name="Durkin A.S."/>
            <person name="Gwinn M.L."/>
            <person name="Haft D.H."/>
            <person name="Kolonay J.F."/>
            <person name="Nelson W.C."/>
            <person name="Mason T.M."/>
            <person name="Tallon L."/>
            <person name="Gray J."/>
            <person name="Granger D."/>
            <person name="Tettelin H."/>
            <person name="Dong H."/>
            <person name="Galvin J.L."/>
            <person name="Duncan M.J."/>
            <person name="Dewhirst F.E."/>
            <person name="Fraser C.M."/>
        </authorList>
    </citation>
    <scope>NUCLEOTIDE SEQUENCE [LARGE SCALE GENOMIC DNA]</scope>
    <source>
        <strain>ATCC BAA-308 / W83</strain>
    </source>
</reference>
<proteinExistence type="inferred from homology"/>
<organism>
    <name type="scientific">Porphyromonas gingivalis (strain ATCC BAA-308 / W83)</name>
    <dbReference type="NCBI Taxonomy" id="242619"/>
    <lineage>
        <taxon>Bacteria</taxon>
        <taxon>Pseudomonadati</taxon>
        <taxon>Bacteroidota</taxon>
        <taxon>Bacteroidia</taxon>
        <taxon>Bacteroidales</taxon>
        <taxon>Porphyromonadaceae</taxon>
        <taxon>Porphyromonas</taxon>
    </lineage>
</organism>
<protein>
    <recommendedName>
        <fullName evidence="1">Large ribosomal subunit protein bL33</fullName>
    </recommendedName>
    <alternativeName>
        <fullName evidence="2">50S ribosomal protein L33</fullName>
    </alternativeName>
</protein>
<feature type="chain" id="PRO_1000059284" description="Large ribosomal subunit protein bL33">
    <location>
        <begin position="1"/>
        <end position="62"/>
    </location>
</feature>
<dbReference type="EMBL" id="AE015924">
    <property type="protein sequence ID" value="AAQ66937.1"/>
    <property type="molecule type" value="Genomic_DNA"/>
</dbReference>
<dbReference type="RefSeq" id="WP_004583623.1">
    <property type="nucleotide sequence ID" value="NC_002950.2"/>
</dbReference>
<dbReference type="SMR" id="Q7MTJ5"/>
<dbReference type="STRING" id="242619.PG_1959"/>
<dbReference type="EnsemblBacteria" id="AAQ66937">
    <property type="protein sequence ID" value="AAQ66937"/>
    <property type="gene ID" value="PG_1959"/>
</dbReference>
<dbReference type="GeneID" id="29257039"/>
<dbReference type="GeneID" id="57239614"/>
<dbReference type="KEGG" id="pgi:PG_1959"/>
<dbReference type="eggNOG" id="COG0267">
    <property type="taxonomic scope" value="Bacteria"/>
</dbReference>
<dbReference type="HOGENOM" id="CLU_190949_3_0_10"/>
<dbReference type="Proteomes" id="UP000000588">
    <property type="component" value="Chromosome"/>
</dbReference>
<dbReference type="GO" id="GO:0005737">
    <property type="term" value="C:cytoplasm"/>
    <property type="evidence" value="ECO:0007669"/>
    <property type="project" value="UniProtKB-ARBA"/>
</dbReference>
<dbReference type="GO" id="GO:1990904">
    <property type="term" value="C:ribonucleoprotein complex"/>
    <property type="evidence" value="ECO:0007669"/>
    <property type="project" value="UniProtKB-KW"/>
</dbReference>
<dbReference type="GO" id="GO:0005840">
    <property type="term" value="C:ribosome"/>
    <property type="evidence" value="ECO:0007669"/>
    <property type="project" value="UniProtKB-KW"/>
</dbReference>
<dbReference type="GO" id="GO:0003735">
    <property type="term" value="F:structural constituent of ribosome"/>
    <property type="evidence" value="ECO:0007669"/>
    <property type="project" value="InterPro"/>
</dbReference>
<dbReference type="GO" id="GO:0006412">
    <property type="term" value="P:translation"/>
    <property type="evidence" value="ECO:0007669"/>
    <property type="project" value="UniProtKB-UniRule"/>
</dbReference>
<dbReference type="Gene3D" id="2.20.28.120">
    <property type="entry name" value="Ribosomal protein L33"/>
    <property type="match status" value="1"/>
</dbReference>
<dbReference type="HAMAP" id="MF_00294">
    <property type="entry name" value="Ribosomal_bL33"/>
    <property type="match status" value="1"/>
</dbReference>
<dbReference type="InterPro" id="IPR001705">
    <property type="entry name" value="Ribosomal_bL33"/>
</dbReference>
<dbReference type="InterPro" id="IPR038584">
    <property type="entry name" value="Ribosomal_bL33_sf"/>
</dbReference>
<dbReference type="InterPro" id="IPR011332">
    <property type="entry name" value="Ribosomal_zn-bd"/>
</dbReference>
<dbReference type="NCBIfam" id="NF001764">
    <property type="entry name" value="PRK00504.1"/>
    <property type="match status" value="1"/>
</dbReference>
<dbReference type="NCBIfam" id="NF001860">
    <property type="entry name" value="PRK00595.1"/>
    <property type="match status" value="1"/>
</dbReference>
<dbReference type="NCBIfam" id="TIGR01023">
    <property type="entry name" value="rpmG_bact"/>
    <property type="match status" value="1"/>
</dbReference>
<dbReference type="PANTHER" id="PTHR43168">
    <property type="entry name" value="50S RIBOSOMAL PROTEIN L33, CHLOROPLASTIC"/>
    <property type="match status" value="1"/>
</dbReference>
<dbReference type="PANTHER" id="PTHR43168:SF2">
    <property type="entry name" value="LARGE RIBOSOMAL SUBUNIT PROTEIN BL33C"/>
    <property type="match status" value="1"/>
</dbReference>
<dbReference type="Pfam" id="PF00471">
    <property type="entry name" value="Ribosomal_L33"/>
    <property type="match status" value="1"/>
</dbReference>
<dbReference type="SUPFAM" id="SSF57829">
    <property type="entry name" value="Zn-binding ribosomal proteins"/>
    <property type="match status" value="1"/>
</dbReference>